<sequence>MTQKERRIFLIEYLLRENPNYHGVQIPDDEDEQKILLRSLMNVRPPQHTSKEFLRIQDNYLQEAIRQHGITGLADLKPVTGRGNGDWYVWRGDITTLKVDAIVNAANSGMTGCWQPCHACIDNCIHTFAGVQLRTVCAGIMQEQGHEEPTGTAKITPAFNLPCKYVLHTVGPIISGQLTDRDCTLLANSYTSCLNLAAENGVKSIAFCCISTGVFRFPAQKAAEIAVATVEDWKAKNNSAMKIVFNVFSEKDEALYNKLMS</sequence>
<keyword id="KW-0326">Glycosidase</keyword>
<keyword id="KW-0378">Hydrolase</keyword>
<keyword id="KW-0479">Metal-binding</keyword>
<keyword id="KW-0862">Zinc</keyword>
<dbReference type="EC" id="3.2.1.-" evidence="1"/>
<dbReference type="EMBL" id="AB046578">
    <property type="protein sequence ID" value="BAB62246.1"/>
    <property type="molecule type" value="Genomic_DNA"/>
</dbReference>
<dbReference type="RefSeq" id="WP_016523496.1">
    <property type="nucleotide sequence ID" value="NZ_CP031393.1"/>
</dbReference>
<dbReference type="SMR" id="Q93RG0"/>
<dbReference type="GO" id="GO:0016798">
    <property type="term" value="F:hydrolase activity, acting on glycosyl bonds"/>
    <property type="evidence" value="ECO:0007669"/>
    <property type="project" value="UniProtKB-KW"/>
</dbReference>
<dbReference type="CDD" id="cd02908">
    <property type="entry name" value="Macro_OAADPr_deacetylase"/>
    <property type="match status" value="1"/>
</dbReference>
<dbReference type="Gene3D" id="3.40.220.10">
    <property type="entry name" value="Leucine Aminopeptidase, subunit E, domain 1"/>
    <property type="match status" value="1"/>
</dbReference>
<dbReference type="InterPro" id="IPR002589">
    <property type="entry name" value="Macro_dom"/>
</dbReference>
<dbReference type="InterPro" id="IPR043472">
    <property type="entry name" value="Macro_dom-like"/>
</dbReference>
<dbReference type="NCBIfam" id="NF003163">
    <property type="entry name" value="PRK04143.1"/>
    <property type="match status" value="1"/>
</dbReference>
<dbReference type="PANTHER" id="PTHR11106">
    <property type="entry name" value="GANGLIOSIDE INDUCED DIFFERENTIATION ASSOCIATED PROTEIN 2-RELATED"/>
    <property type="match status" value="1"/>
</dbReference>
<dbReference type="PANTHER" id="PTHR11106:SF27">
    <property type="entry name" value="MACRO DOMAIN-CONTAINING PROTEIN"/>
    <property type="match status" value="1"/>
</dbReference>
<dbReference type="Pfam" id="PF01661">
    <property type="entry name" value="Macro"/>
    <property type="match status" value="1"/>
</dbReference>
<dbReference type="SMART" id="SM00506">
    <property type="entry name" value="A1pp"/>
    <property type="match status" value="1"/>
</dbReference>
<dbReference type="SUPFAM" id="SSF52949">
    <property type="entry name" value="Macro domain-like"/>
    <property type="match status" value="1"/>
</dbReference>
<dbReference type="PROSITE" id="PS51154">
    <property type="entry name" value="MACRO"/>
    <property type="match status" value="1"/>
</dbReference>
<accession>Q93RG0</accession>
<feature type="chain" id="PRO_0000089223" description="Protein-ADP-ribose hydrolase">
    <location>
        <begin position="1"/>
        <end position="261"/>
    </location>
</feature>
<feature type="domain" description="Macro" evidence="2">
    <location>
        <begin position="74"/>
        <end position="261"/>
    </location>
</feature>
<feature type="binding site" evidence="1">
    <location>
        <position position="93"/>
    </location>
    <ligand>
        <name>ADP-D-ribose</name>
        <dbReference type="ChEBI" id="CHEBI:57967"/>
    </ligand>
</feature>
<feature type="binding site" evidence="1">
    <location>
        <position position="94"/>
    </location>
    <ligand>
        <name>ADP-D-ribose</name>
        <dbReference type="ChEBI" id="CHEBI:57967"/>
    </ligand>
</feature>
<feature type="binding site" evidence="1">
    <location>
        <position position="107"/>
    </location>
    <ligand>
        <name>ADP-D-ribose</name>
        <dbReference type="ChEBI" id="CHEBI:57967"/>
    </ligand>
</feature>
<feature type="binding site" evidence="1">
    <location>
        <position position="113"/>
    </location>
    <ligand>
        <name>Zn(2+)</name>
        <dbReference type="ChEBI" id="CHEBI:29105"/>
    </ligand>
</feature>
<feature type="binding site" evidence="1">
    <location>
        <position position="118"/>
    </location>
    <ligand>
        <name>Zn(2+)</name>
        <dbReference type="ChEBI" id="CHEBI:29105"/>
    </ligand>
</feature>
<feature type="binding site" evidence="1">
    <location>
        <position position="120"/>
    </location>
    <ligand>
        <name>ADP-D-ribose</name>
        <dbReference type="ChEBI" id="CHEBI:57967"/>
    </ligand>
</feature>
<feature type="binding site" evidence="1">
    <location>
        <position position="120"/>
    </location>
    <ligand>
        <name>Zn(2+)</name>
        <dbReference type="ChEBI" id="CHEBI:29105"/>
    </ligand>
</feature>
<feature type="binding site" evidence="1">
    <location>
        <position position="121"/>
    </location>
    <ligand>
        <name>ADP-D-ribose</name>
        <dbReference type="ChEBI" id="CHEBI:57967"/>
    </ligand>
</feature>
<feature type="binding site" evidence="1">
    <location>
        <position position="122"/>
    </location>
    <ligand>
        <name>ADP-D-ribose</name>
        <dbReference type="ChEBI" id="CHEBI:57967"/>
    </ligand>
</feature>
<feature type="binding site" evidence="1">
    <location>
        <position position="211"/>
    </location>
    <ligand>
        <name>ADP-D-ribose</name>
        <dbReference type="ChEBI" id="CHEBI:57967"/>
    </ligand>
</feature>
<feature type="binding site" evidence="1">
    <location>
        <position position="212"/>
    </location>
    <ligand>
        <name>ADP-D-ribose</name>
        <dbReference type="ChEBI" id="CHEBI:57967"/>
    </ligand>
</feature>
<feature type="binding site" evidence="1">
    <location>
        <position position="213"/>
    </location>
    <ligand>
        <name>ADP-D-ribose</name>
        <dbReference type="ChEBI" id="CHEBI:57967"/>
    </ligand>
</feature>
<feature type="binding site" evidence="1">
    <location>
        <position position="215"/>
    </location>
    <ligand>
        <name>ADP-D-ribose</name>
        <dbReference type="ChEBI" id="CHEBI:57967"/>
    </ligand>
</feature>
<comment type="function">
    <text evidence="1">ADP-ribosylhydrolase that specifically reverses the SirTM-mediated mono-ADP-ribosylation at an asparatate residue of GcvH-L, by releasing ADP-ribose from the target protein (By similarity). May play a role in the regulation of the response to host-induced oxidative stress (By similarity).</text>
</comment>
<comment type="catalytic activity">
    <reaction evidence="1">
        <text>4-O-(ADP-D-ribosyl)-L-aspartyl-[protein] + H2O = L-aspartyl-[protein] + ADP-D-ribose + H(+)</text>
        <dbReference type="Rhea" id="RHEA:54428"/>
        <dbReference type="Rhea" id="RHEA-COMP:9867"/>
        <dbReference type="Rhea" id="RHEA-COMP:13832"/>
        <dbReference type="ChEBI" id="CHEBI:15377"/>
        <dbReference type="ChEBI" id="CHEBI:15378"/>
        <dbReference type="ChEBI" id="CHEBI:29961"/>
        <dbReference type="ChEBI" id="CHEBI:57967"/>
        <dbReference type="ChEBI" id="CHEBI:138102"/>
    </reaction>
    <physiologicalReaction direction="left-to-right" evidence="1">
        <dbReference type="Rhea" id="RHEA:54429"/>
    </physiologicalReaction>
</comment>
<comment type="cofactor">
    <cofactor evidence="1">
        <name>Zn(2+)</name>
        <dbReference type="ChEBI" id="CHEBI:29105"/>
    </cofactor>
    <text evidence="1">Binds 1 Zn(2+) ion per subunit.</text>
</comment>
<comment type="similarity">
    <text evidence="3">Belongs to the MacroD-type family. Zn-Macro subfamily.</text>
</comment>
<name>ADPRH_TREMD</name>
<organism>
    <name type="scientific">Treponema medium</name>
    <dbReference type="NCBI Taxonomy" id="58231"/>
    <lineage>
        <taxon>Bacteria</taxon>
        <taxon>Pseudomonadati</taxon>
        <taxon>Spirochaetota</taxon>
        <taxon>Spirochaetia</taxon>
        <taxon>Spirochaetales</taxon>
        <taxon>Treponemataceae</taxon>
        <taxon>Treponema</taxon>
    </lineage>
</organism>
<evidence type="ECO:0000250" key="1">
    <source>
        <dbReference type="UniProtKB" id="P0DN70"/>
    </source>
</evidence>
<evidence type="ECO:0000255" key="2">
    <source>
        <dbReference type="PROSITE-ProRule" id="PRU00490"/>
    </source>
</evidence>
<evidence type="ECO:0000305" key="3"/>
<proteinExistence type="inferred from homology"/>
<reference key="1">
    <citation type="submission" date="2000-07" db="EMBL/GenBank/DDBJ databases">
        <title>A phylogenetic analysis of a human oral spirochete Treponema medium by flagellar genes.</title>
        <authorList>
            <person name="Fukunaga M."/>
        </authorList>
    </citation>
    <scope>NUCLEOTIDE SEQUENCE [GENOMIC DNA]</scope>
    <source>
        <strain>ATCC 700293</strain>
    </source>
</reference>
<protein>
    <recommendedName>
        <fullName evidence="1">Protein-ADP-ribose hydrolase</fullName>
        <ecNumber evidence="1">3.2.1.-</ecNumber>
    </recommendedName>
</protein>